<name>Y1401_MYCBO</name>
<sequence>MVVALVGSAIVDLHSRPPWSNNAVRRLGVALRDGVDPPVDCPSYAEVMLWHADLAAEVQDRIEGRSWSASELLVTSRAKSQDTLLAKLRRRPYLQLNTIQDIAGVRIDADLLLGEQTRLAREIADHFGADQPAIHDLRDHPHAGYRAVHVWLRLPAGRVEIQIRTILQSLWANFYELLADAYGRGIRYDERPEQLAAGVVPAQLQELVGVMQDASADLAMHEAEWQHCAEIEYPGQRAMALGEASKNKATVLATTKFRLERAINEAESAGGGG</sequence>
<dbReference type="EMBL" id="LT708304">
    <property type="protein sequence ID" value="SIU00004.1"/>
    <property type="molecule type" value="Genomic_DNA"/>
</dbReference>
<dbReference type="RefSeq" id="NP_855055.1">
    <property type="nucleotide sequence ID" value="NC_002945.3"/>
</dbReference>
<dbReference type="RefSeq" id="WP_003407164.1">
    <property type="nucleotide sequence ID" value="NC_002945.4"/>
</dbReference>
<dbReference type="SMR" id="P64834"/>
<dbReference type="KEGG" id="mbo:BQ2027_MB1401"/>
<dbReference type="PATRIC" id="fig|233413.5.peg.1535"/>
<dbReference type="Proteomes" id="UP000001419">
    <property type="component" value="Chromosome"/>
</dbReference>
<dbReference type="GO" id="GO:0015969">
    <property type="term" value="P:guanosine tetraphosphate metabolic process"/>
    <property type="evidence" value="ECO:0007669"/>
    <property type="project" value="InterPro"/>
</dbReference>
<dbReference type="CDD" id="cd05399">
    <property type="entry name" value="NT_Rel-Spo_like"/>
    <property type="match status" value="1"/>
</dbReference>
<dbReference type="Gene3D" id="3.30.460.10">
    <property type="entry name" value="Beta Polymerase, domain 2"/>
    <property type="match status" value="1"/>
</dbReference>
<dbReference type="InterPro" id="IPR052366">
    <property type="entry name" value="GTP_Pyrophosphokinase"/>
</dbReference>
<dbReference type="InterPro" id="IPR043519">
    <property type="entry name" value="NT_sf"/>
</dbReference>
<dbReference type="InterPro" id="IPR007685">
    <property type="entry name" value="RelA_SpoT"/>
</dbReference>
<dbReference type="PANTHER" id="PTHR47837">
    <property type="entry name" value="GTP PYROPHOSPHOKINASE YJBM"/>
    <property type="match status" value="1"/>
</dbReference>
<dbReference type="PANTHER" id="PTHR47837:SF1">
    <property type="entry name" value="GTP PYROPHOSPHOKINASE YJBM"/>
    <property type="match status" value="1"/>
</dbReference>
<dbReference type="Pfam" id="PF04607">
    <property type="entry name" value="RelA_SpoT"/>
    <property type="match status" value="1"/>
</dbReference>
<dbReference type="SMART" id="SM00954">
    <property type="entry name" value="RelA_SpoT"/>
    <property type="match status" value="1"/>
</dbReference>
<dbReference type="SUPFAM" id="SSF81301">
    <property type="entry name" value="Nucleotidyltransferase"/>
    <property type="match status" value="1"/>
</dbReference>
<proteinExistence type="predicted"/>
<organism>
    <name type="scientific">Mycobacterium bovis (strain ATCC BAA-935 / AF2122/97)</name>
    <dbReference type="NCBI Taxonomy" id="233413"/>
    <lineage>
        <taxon>Bacteria</taxon>
        <taxon>Bacillati</taxon>
        <taxon>Actinomycetota</taxon>
        <taxon>Actinomycetes</taxon>
        <taxon>Mycobacteriales</taxon>
        <taxon>Mycobacteriaceae</taxon>
        <taxon>Mycobacterium</taxon>
        <taxon>Mycobacterium tuberculosis complex</taxon>
    </lineage>
</organism>
<reference key="1">
    <citation type="journal article" date="2003" name="Proc. Natl. Acad. Sci. U.S.A.">
        <title>The complete genome sequence of Mycobacterium bovis.</title>
        <authorList>
            <person name="Garnier T."/>
            <person name="Eiglmeier K."/>
            <person name="Camus J.-C."/>
            <person name="Medina N."/>
            <person name="Mansoor H."/>
            <person name="Pryor M."/>
            <person name="Duthoy S."/>
            <person name="Grondin S."/>
            <person name="Lacroix C."/>
            <person name="Monsempe C."/>
            <person name="Simon S."/>
            <person name="Harris B."/>
            <person name="Atkin R."/>
            <person name="Doggett J."/>
            <person name="Mayes R."/>
            <person name="Keating L."/>
            <person name="Wheeler P.R."/>
            <person name="Parkhill J."/>
            <person name="Barrell B.G."/>
            <person name="Cole S.T."/>
            <person name="Gordon S.V."/>
            <person name="Hewinson R.G."/>
        </authorList>
    </citation>
    <scope>NUCLEOTIDE SEQUENCE [LARGE SCALE GENOMIC DNA]</scope>
    <source>
        <strain>ATCC BAA-935 / AF2122/97</strain>
    </source>
</reference>
<reference key="2">
    <citation type="journal article" date="2017" name="Genome Announc.">
        <title>Updated reference genome sequence and annotation of Mycobacterium bovis AF2122/97.</title>
        <authorList>
            <person name="Malone K.M."/>
            <person name="Farrell D."/>
            <person name="Stuber T.P."/>
            <person name="Schubert O.T."/>
            <person name="Aebersold R."/>
            <person name="Robbe-Austerman S."/>
            <person name="Gordon S.V."/>
        </authorList>
    </citation>
    <scope>NUCLEOTIDE SEQUENCE [LARGE SCALE GENOMIC DNA]</scope>
    <scope>GENOME REANNOTATION</scope>
    <source>
        <strain>ATCC BAA-935 / AF2122/97</strain>
    </source>
</reference>
<keyword id="KW-1185">Reference proteome</keyword>
<protein>
    <recommendedName>
        <fullName>Uncharacterized protein Mb1401</fullName>
    </recommendedName>
</protein>
<accession>P64834</accession>
<accession>A0A1R3XZ48</accession>
<accession>Q11036</accession>
<accession>X2BHW3</accession>
<feature type="chain" id="PRO_0000103835" description="Uncharacterized protein Mb1401">
    <location>
        <begin position="1"/>
        <end position="273"/>
    </location>
</feature>
<gene>
    <name type="ordered locus">BQ2027_MB1401</name>
</gene>